<accession>Q68W59</accession>
<proteinExistence type="inferred from homology"/>
<organism>
    <name type="scientific">Rickettsia typhi (strain ATCC VR-144 / Wilmington)</name>
    <dbReference type="NCBI Taxonomy" id="257363"/>
    <lineage>
        <taxon>Bacteria</taxon>
        <taxon>Pseudomonadati</taxon>
        <taxon>Pseudomonadota</taxon>
        <taxon>Alphaproteobacteria</taxon>
        <taxon>Rickettsiales</taxon>
        <taxon>Rickettsiaceae</taxon>
        <taxon>Rickettsieae</taxon>
        <taxon>Rickettsia</taxon>
        <taxon>typhus group</taxon>
    </lineage>
</organism>
<protein>
    <recommendedName>
        <fullName evidence="1">GTPase Der</fullName>
    </recommendedName>
    <alternativeName>
        <fullName evidence="1">GTP-binding protein EngA</fullName>
    </alternativeName>
</protein>
<reference key="1">
    <citation type="journal article" date="2004" name="J. Bacteriol.">
        <title>Complete genome sequence of Rickettsia typhi and comparison with sequences of other Rickettsiae.</title>
        <authorList>
            <person name="McLeod M.P."/>
            <person name="Qin X."/>
            <person name="Karpathy S.E."/>
            <person name="Gioia J."/>
            <person name="Highlander S.K."/>
            <person name="Fox G.E."/>
            <person name="McNeill T.Z."/>
            <person name="Jiang H."/>
            <person name="Muzny D."/>
            <person name="Jacob L.S."/>
            <person name="Hawes A.C."/>
            <person name="Sodergren E."/>
            <person name="Gill R."/>
            <person name="Hume J."/>
            <person name="Morgan M."/>
            <person name="Fan G."/>
            <person name="Amin A.G."/>
            <person name="Gibbs R.A."/>
            <person name="Hong C."/>
            <person name="Yu X.-J."/>
            <person name="Walker D.H."/>
            <person name="Weinstock G.M."/>
        </authorList>
    </citation>
    <scope>NUCLEOTIDE SEQUENCE [LARGE SCALE GENOMIC DNA]</scope>
    <source>
        <strain>ATCC VR-144 / Wilmington</strain>
    </source>
</reference>
<dbReference type="EMBL" id="AE017197">
    <property type="protein sequence ID" value="AAU04133.1"/>
    <property type="molecule type" value="Genomic_DNA"/>
</dbReference>
<dbReference type="RefSeq" id="WP_011191110.1">
    <property type="nucleotide sequence ID" value="NC_006142.1"/>
</dbReference>
<dbReference type="SMR" id="Q68W59"/>
<dbReference type="KEGG" id="rty:RT0673"/>
<dbReference type="eggNOG" id="COG1160">
    <property type="taxonomic scope" value="Bacteria"/>
</dbReference>
<dbReference type="HOGENOM" id="CLU_016077_5_0_5"/>
<dbReference type="OrthoDB" id="9805918at2"/>
<dbReference type="Proteomes" id="UP000000604">
    <property type="component" value="Chromosome"/>
</dbReference>
<dbReference type="GO" id="GO:0005525">
    <property type="term" value="F:GTP binding"/>
    <property type="evidence" value="ECO:0007669"/>
    <property type="project" value="UniProtKB-UniRule"/>
</dbReference>
<dbReference type="GO" id="GO:0042254">
    <property type="term" value="P:ribosome biogenesis"/>
    <property type="evidence" value="ECO:0007669"/>
    <property type="project" value="UniProtKB-KW"/>
</dbReference>
<dbReference type="CDD" id="cd01894">
    <property type="entry name" value="EngA1"/>
    <property type="match status" value="1"/>
</dbReference>
<dbReference type="CDD" id="cd01895">
    <property type="entry name" value="EngA2"/>
    <property type="match status" value="1"/>
</dbReference>
<dbReference type="FunFam" id="3.30.300.20:FF:000004">
    <property type="entry name" value="GTPase Der"/>
    <property type="match status" value="1"/>
</dbReference>
<dbReference type="Gene3D" id="3.30.300.20">
    <property type="match status" value="1"/>
</dbReference>
<dbReference type="Gene3D" id="3.40.50.300">
    <property type="entry name" value="P-loop containing nucleotide triphosphate hydrolases"/>
    <property type="match status" value="2"/>
</dbReference>
<dbReference type="HAMAP" id="MF_00195">
    <property type="entry name" value="GTPase_Der"/>
    <property type="match status" value="1"/>
</dbReference>
<dbReference type="InterPro" id="IPR031166">
    <property type="entry name" value="G_ENGA"/>
</dbReference>
<dbReference type="InterPro" id="IPR006073">
    <property type="entry name" value="GTP-bd"/>
</dbReference>
<dbReference type="InterPro" id="IPR016484">
    <property type="entry name" value="GTPase_Der"/>
</dbReference>
<dbReference type="InterPro" id="IPR032859">
    <property type="entry name" value="KH_dom-like"/>
</dbReference>
<dbReference type="InterPro" id="IPR015946">
    <property type="entry name" value="KH_dom-like_a/b"/>
</dbReference>
<dbReference type="InterPro" id="IPR027417">
    <property type="entry name" value="P-loop_NTPase"/>
</dbReference>
<dbReference type="InterPro" id="IPR005225">
    <property type="entry name" value="Small_GTP-bd"/>
</dbReference>
<dbReference type="NCBIfam" id="TIGR03594">
    <property type="entry name" value="GTPase_EngA"/>
    <property type="match status" value="1"/>
</dbReference>
<dbReference type="NCBIfam" id="TIGR00231">
    <property type="entry name" value="small_GTP"/>
    <property type="match status" value="2"/>
</dbReference>
<dbReference type="PANTHER" id="PTHR43834">
    <property type="entry name" value="GTPASE DER"/>
    <property type="match status" value="1"/>
</dbReference>
<dbReference type="PANTHER" id="PTHR43834:SF6">
    <property type="entry name" value="GTPASE DER"/>
    <property type="match status" value="1"/>
</dbReference>
<dbReference type="Pfam" id="PF14714">
    <property type="entry name" value="KH_dom-like"/>
    <property type="match status" value="1"/>
</dbReference>
<dbReference type="Pfam" id="PF01926">
    <property type="entry name" value="MMR_HSR1"/>
    <property type="match status" value="2"/>
</dbReference>
<dbReference type="PIRSF" id="PIRSF006485">
    <property type="entry name" value="GTP-binding_EngA"/>
    <property type="match status" value="1"/>
</dbReference>
<dbReference type="PRINTS" id="PR00326">
    <property type="entry name" value="GTP1OBG"/>
</dbReference>
<dbReference type="SUPFAM" id="SSF52540">
    <property type="entry name" value="P-loop containing nucleoside triphosphate hydrolases"/>
    <property type="match status" value="2"/>
</dbReference>
<dbReference type="PROSITE" id="PS51712">
    <property type="entry name" value="G_ENGA"/>
    <property type="match status" value="2"/>
</dbReference>
<feature type="chain" id="PRO_0000278049" description="GTPase Der">
    <location>
        <begin position="1"/>
        <end position="447"/>
    </location>
</feature>
<feature type="domain" description="EngA-type G 1">
    <location>
        <begin position="4"/>
        <end position="165"/>
    </location>
</feature>
<feature type="domain" description="EngA-type G 2">
    <location>
        <begin position="180"/>
        <end position="357"/>
    </location>
</feature>
<feature type="domain" description="KH-like" evidence="1">
    <location>
        <begin position="358"/>
        <end position="443"/>
    </location>
</feature>
<feature type="binding site" evidence="1">
    <location>
        <begin position="10"/>
        <end position="17"/>
    </location>
    <ligand>
        <name>GTP</name>
        <dbReference type="ChEBI" id="CHEBI:37565"/>
        <label>1</label>
    </ligand>
</feature>
<feature type="binding site" evidence="1">
    <location>
        <begin position="57"/>
        <end position="61"/>
    </location>
    <ligand>
        <name>GTP</name>
        <dbReference type="ChEBI" id="CHEBI:37565"/>
        <label>1</label>
    </ligand>
</feature>
<feature type="binding site" evidence="1">
    <location>
        <begin position="119"/>
        <end position="122"/>
    </location>
    <ligand>
        <name>GTP</name>
        <dbReference type="ChEBI" id="CHEBI:37565"/>
        <label>1</label>
    </ligand>
</feature>
<feature type="binding site" evidence="1">
    <location>
        <begin position="186"/>
        <end position="193"/>
    </location>
    <ligand>
        <name>GTP</name>
        <dbReference type="ChEBI" id="CHEBI:37565"/>
        <label>2</label>
    </ligand>
</feature>
<feature type="binding site" evidence="1">
    <location>
        <begin position="233"/>
        <end position="237"/>
    </location>
    <ligand>
        <name>GTP</name>
        <dbReference type="ChEBI" id="CHEBI:37565"/>
        <label>2</label>
    </ligand>
</feature>
<feature type="binding site" evidence="1">
    <location>
        <begin position="298"/>
        <end position="301"/>
    </location>
    <ligand>
        <name>GTP</name>
        <dbReference type="ChEBI" id="CHEBI:37565"/>
        <label>2</label>
    </ligand>
</feature>
<name>DER_RICTY</name>
<evidence type="ECO:0000255" key="1">
    <source>
        <dbReference type="HAMAP-Rule" id="MF_00195"/>
    </source>
</evidence>
<gene>
    <name evidence="1" type="primary">der</name>
    <name type="synonym">engA</name>
    <name type="ordered locus">RT0673</name>
</gene>
<keyword id="KW-0342">GTP-binding</keyword>
<keyword id="KW-0547">Nucleotide-binding</keyword>
<keyword id="KW-0677">Repeat</keyword>
<keyword id="KW-0690">Ribosome biogenesis</keyword>
<comment type="function">
    <text evidence="1">GTPase that plays an essential role in the late steps of ribosome biogenesis.</text>
</comment>
<comment type="subunit">
    <text evidence="1">Associates with the 50S ribosomal subunit.</text>
</comment>
<comment type="similarity">
    <text evidence="1">Belongs to the TRAFAC class TrmE-Era-EngA-EngB-Septin-like GTPase superfamily. EngA (Der) GTPase family.</text>
</comment>
<sequence length="447" mass="51015">MTKKIITLVGRPNVGKSTLFNRLSIRKKAIVHDLPGVTRDRKYTDGKIGSFKFLLIDTPGLEENPDNMGKRLMEQTTQAILEADLICLMVDGRSGVLPDDKLLSSFVRKYNKHCILVVNKCEKAFDFDKEYYKLGFDSIVIISAEHGTGLIDLYDEIIAKLSIKESIERNIADPFRGDCLQIVVSGRPNAGKSTFINAIINDERLLTGPEAGITRESIEIDWQYKNTHIKLIDTAGLRKKSTITASLEKLSTSDTINAIKFANTVILMIDALAHLKQQDLNIANHIINEGRSIIIVVNKWDLVEESEKEAFQAEFYYQINTHLPQIKGVPVLFISAINKQNIEQVLDACLKIYKIWNKKITTGKLNEWLNFTTKVHTLPLQKCGRRVRIKYMTQTKTRPPTFKLFSNNPEKITDSYTRYLVNNMRDTFDMHGIPIRFTYVKNKNPYV</sequence>